<keyword id="KW-0002">3D-structure</keyword>
<keyword id="KW-1185">Reference proteome</keyword>
<organism>
    <name type="scientific">Bacillus subtilis (strain 168)</name>
    <dbReference type="NCBI Taxonomy" id="224308"/>
    <lineage>
        <taxon>Bacteria</taxon>
        <taxon>Bacillati</taxon>
        <taxon>Bacillota</taxon>
        <taxon>Bacilli</taxon>
        <taxon>Bacillales</taxon>
        <taxon>Bacillaceae</taxon>
        <taxon>Bacillus</taxon>
    </lineage>
</organism>
<feature type="chain" id="PRO_0000049719" description="Uncharacterized protein YppE">
    <location>
        <begin position="1"/>
        <end position="123"/>
    </location>
</feature>
<feature type="helix" evidence="2">
    <location>
        <begin position="3"/>
        <end position="29"/>
    </location>
</feature>
<feature type="turn" evidence="2">
    <location>
        <begin position="36"/>
        <end position="39"/>
    </location>
</feature>
<feature type="helix" evidence="2">
    <location>
        <begin position="40"/>
        <end position="64"/>
    </location>
</feature>
<feature type="strand" evidence="1">
    <location>
        <begin position="68"/>
        <end position="70"/>
    </location>
</feature>
<feature type="helix" evidence="2">
    <location>
        <begin position="72"/>
        <end position="91"/>
    </location>
</feature>
<feature type="helix" evidence="2">
    <location>
        <begin position="96"/>
        <end position="121"/>
    </location>
</feature>
<dbReference type="EMBL" id="L47838">
    <property type="protein sequence ID" value="AAB38463.1"/>
    <property type="molecule type" value="Genomic_DNA"/>
</dbReference>
<dbReference type="EMBL" id="AL009126">
    <property type="protein sequence ID" value="CAB14144.1"/>
    <property type="molecule type" value="Genomic_DNA"/>
</dbReference>
<dbReference type="PIR" id="B69940">
    <property type="entry name" value="B69940"/>
</dbReference>
<dbReference type="RefSeq" id="NP_390109.1">
    <property type="nucleotide sequence ID" value="NC_000964.3"/>
</dbReference>
<dbReference type="RefSeq" id="WP_003246080.1">
    <property type="nucleotide sequence ID" value="NZ_OZ025638.1"/>
</dbReference>
<dbReference type="PDB" id="2HFI">
    <property type="method" value="NMR"/>
    <property type="chains" value="A=1-123"/>
</dbReference>
<dbReference type="PDB" id="2IM8">
    <property type="method" value="X-ray"/>
    <property type="resolution" value="2.00 A"/>
    <property type="chains" value="A/B=1-123"/>
</dbReference>
<dbReference type="PDBsum" id="2HFI"/>
<dbReference type="PDBsum" id="2IM8"/>
<dbReference type="BMRB" id="P50833"/>
<dbReference type="SMR" id="P50833"/>
<dbReference type="FunCoup" id="P50833">
    <property type="interactions" value="5"/>
</dbReference>
<dbReference type="STRING" id="224308.BSU22270"/>
<dbReference type="PaxDb" id="224308-BSU22270"/>
<dbReference type="EnsemblBacteria" id="CAB14144">
    <property type="protein sequence ID" value="CAB14144"/>
    <property type="gene ID" value="BSU_22270"/>
</dbReference>
<dbReference type="GeneID" id="939047"/>
<dbReference type="KEGG" id="bsu:BSU22270"/>
<dbReference type="PATRIC" id="fig|224308.179.peg.2431"/>
<dbReference type="InParanoid" id="P50833"/>
<dbReference type="OrthoDB" id="2361079at2"/>
<dbReference type="PhylomeDB" id="P50833"/>
<dbReference type="BioCyc" id="BSUB:BSU22270-MONOMER"/>
<dbReference type="EvolutionaryTrace" id="P50833"/>
<dbReference type="Proteomes" id="UP000001570">
    <property type="component" value="Chromosome"/>
</dbReference>
<dbReference type="Gene3D" id="1.20.120.440">
    <property type="entry name" value="YppE-like"/>
    <property type="match status" value="1"/>
</dbReference>
<dbReference type="InterPro" id="IPR014913">
    <property type="entry name" value="YppE-like"/>
</dbReference>
<dbReference type="InterPro" id="IPR023351">
    <property type="entry name" value="YppE-like_sf"/>
</dbReference>
<dbReference type="Pfam" id="PF08807">
    <property type="entry name" value="DUF1798"/>
    <property type="match status" value="1"/>
</dbReference>
<dbReference type="SUPFAM" id="SSF140415">
    <property type="entry name" value="YppE-like"/>
    <property type="match status" value="1"/>
</dbReference>
<name>YPPE_BACSU</name>
<proteinExistence type="evidence at protein level"/>
<reference key="1">
    <citation type="journal article" date="1996" name="Microbiology">
        <title>Sequence analysis of the Bacillus subtilis chromosome region between the serA and kdg loci cloned in a yeast artificial chromosome.</title>
        <authorList>
            <person name="Sorokin A.V."/>
            <person name="Azevedo V."/>
            <person name="Zumstein E."/>
            <person name="Galleron N."/>
            <person name="Ehrlich S.D."/>
            <person name="Serror P."/>
        </authorList>
    </citation>
    <scope>NUCLEOTIDE SEQUENCE [GENOMIC DNA]</scope>
    <source>
        <strain>168 / Marburg / ATCC 6051 / DSM 10 / JCM 1465 / NBRC 13719 / NCIMB 3610 / NRRL NRS-744 / VKM B-501</strain>
    </source>
</reference>
<reference key="2">
    <citation type="journal article" date="1997" name="Nature">
        <title>The complete genome sequence of the Gram-positive bacterium Bacillus subtilis.</title>
        <authorList>
            <person name="Kunst F."/>
            <person name="Ogasawara N."/>
            <person name="Moszer I."/>
            <person name="Albertini A.M."/>
            <person name="Alloni G."/>
            <person name="Azevedo V."/>
            <person name="Bertero M.G."/>
            <person name="Bessieres P."/>
            <person name="Bolotin A."/>
            <person name="Borchert S."/>
            <person name="Borriss R."/>
            <person name="Boursier L."/>
            <person name="Brans A."/>
            <person name="Braun M."/>
            <person name="Brignell S.C."/>
            <person name="Bron S."/>
            <person name="Brouillet S."/>
            <person name="Bruschi C.V."/>
            <person name="Caldwell B."/>
            <person name="Capuano V."/>
            <person name="Carter N.M."/>
            <person name="Choi S.-K."/>
            <person name="Codani J.-J."/>
            <person name="Connerton I.F."/>
            <person name="Cummings N.J."/>
            <person name="Daniel R.A."/>
            <person name="Denizot F."/>
            <person name="Devine K.M."/>
            <person name="Duesterhoeft A."/>
            <person name="Ehrlich S.D."/>
            <person name="Emmerson P.T."/>
            <person name="Entian K.-D."/>
            <person name="Errington J."/>
            <person name="Fabret C."/>
            <person name="Ferrari E."/>
            <person name="Foulger D."/>
            <person name="Fritz C."/>
            <person name="Fujita M."/>
            <person name="Fujita Y."/>
            <person name="Fuma S."/>
            <person name="Galizzi A."/>
            <person name="Galleron N."/>
            <person name="Ghim S.-Y."/>
            <person name="Glaser P."/>
            <person name="Goffeau A."/>
            <person name="Golightly E.J."/>
            <person name="Grandi G."/>
            <person name="Guiseppi G."/>
            <person name="Guy B.J."/>
            <person name="Haga K."/>
            <person name="Haiech J."/>
            <person name="Harwood C.R."/>
            <person name="Henaut A."/>
            <person name="Hilbert H."/>
            <person name="Holsappel S."/>
            <person name="Hosono S."/>
            <person name="Hullo M.-F."/>
            <person name="Itaya M."/>
            <person name="Jones L.-M."/>
            <person name="Joris B."/>
            <person name="Karamata D."/>
            <person name="Kasahara Y."/>
            <person name="Klaerr-Blanchard M."/>
            <person name="Klein C."/>
            <person name="Kobayashi Y."/>
            <person name="Koetter P."/>
            <person name="Koningstein G."/>
            <person name="Krogh S."/>
            <person name="Kumano M."/>
            <person name="Kurita K."/>
            <person name="Lapidus A."/>
            <person name="Lardinois S."/>
            <person name="Lauber J."/>
            <person name="Lazarevic V."/>
            <person name="Lee S.-M."/>
            <person name="Levine A."/>
            <person name="Liu H."/>
            <person name="Masuda S."/>
            <person name="Mauel C."/>
            <person name="Medigue C."/>
            <person name="Medina N."/>
            <person name="Mellado R.P."/>
            <person name="Mizuno M."/>
            <person name="Moestl D."/>
            <person name="Nakai S."/>
            <person name="Noback M."/>
            <person name="Noone D."/>
            <person name="O'Reilly M."/>
            <person name="Ogawa K."/>
            <person name="Ogiwara A."/>
            <person name="Oudega B."/>
            <person name="Park S.-H."/>
            <person name="Parro V."/>
            <person name="Pohl T.M."/>
            <person name="Portetelle D."/>
            <person name="Porwollik S."/>
            <person name="Prescott A.M."/>
            <person name="Presecan E."/>
            <person name="Pujic P."/>
            <person name="Purnelle B."/>
            <person name="Rapoport G."/>
            <person name="Rey M."/>
            <person name="Reynolds S."/>
            <person name="Rieger M."/>
            <person name="Rivolta C."/>
            <person name="Rocha E."/>
            <person name="Roche B."/>
            <person name="Rose M."/>
            <person name="Sadaie Y."/>
            <person name="Sato T."/>
            <person name="Scanlan E."/>
            <person name="Schleich S."/>
            <person name="Schroeter R."/>
            <person name="Scoffone F."/>
            <person name="Sekiguchi J."/>
            <person name="Sekowska A."/>
            <person name="Seror S.J."/>
            <person name="Serror P."/>
            <person name="Shin B.-S."/>
            <person name="Soldo B."/>
            <person name="Sorokin A."/>
            <person name="Tacconi E."/>
            <person name="Takagi T."/>
            <person name="Takahashi H."/>
            <person name="Takemaru K."/>
            <person name="Takeuchi M."/>
            <person name="Tamakoshi A."/>
            <person name="Tanaka T."/>
            <person name="Terpstra P."/>
            <person name="Tognoni A."/>
            <person name="Tosato V."/>
            <person name="Uchiyama S."/>
            <person name="Vandenbol M."/>
            <person name="Vannier F."/>
            <person name="Vassarotti A."/>
            <person name="Viari A."/>
            <person name="Wambutt R."/>
            <person name="Wedler E."/>
            <person name="Wedler H."/>
            <person name="Weitzenegger T."/>
            <person name="Winters P."/>
            <person name="Wipat A."/>
            <person name="Yamamoto H."/>
            <person name="Yamane K."/>
            <person name="Yasumoto K."/>
            <person name="Yata K."/>
            <person name="Yoshida K."/>
            <person name="Yoshikawa H.-F."/>
            <person name="Zumstein E."/>
            <person name="Yoshikawa H."/>
            <person name="Danchin A."/>
        </authorList>
    </citation>
    <scope>NUCLEOTIDE SEQUENCE [LARGE SCALE GENOMIC DNA]</scope>
    <source>
        <strain>168</strain>
    </source>
</reference>
<reference key="3">
    <citation type="submission" date="2006-07" db="PDB data bank">
        <title>Solution NMR structure of hypothetical protein yppE: northeast structural genomics consortium target SR213.</title>
        <authorList>
            <consortium name="Northeast structural genomics consortium (NESG)"/>
        </authorList>
    </citation>
    <scope>STRUCTURE BY NMR</scope>
</reference>
<reference key="4">
    <citation type="submission" date="2006-11" db="PDB data bank">
        <title>X-ray structure of hypothetical protein yppE. Northeast structural genomics consortium target SR213.</title>
        <authorList>
            <consortium name="Northeast structural genomics consortium (NESG)"/>
        </authorList>
    </citation>
    <scope>X-RAY CRYSTALLOGRAPHY (2.0 ANGSTROMS)</scope>
</reference>
<accession>P50833</accession>
<sequence>MLSQTLLEMTEQMIEVAEKGADRYQEGKNSNHSYDFFETIKPAVEENDELAARWAEGALELIKVRRPKYVHKEQIEAVKDNFLELVLQSYVHHIHKKRFKDITESVLYTLHAVKDEIAREDSR</sequence>
<gene>
    <name type="primary">yppE</name>
    <name type="ordered locus">BSU22270</name>
</gene>
<evidence type="ECO:0007829" key="1">
    <source>
        <dbReference type="PDB" id="2HFI"/>
    </source>
</evidence>
<evidence type="ECO:0007829" key="2">
    <source>
        <dbReference type="PDB" id="2IM8"/>
    </source>
</evidence>
<protein>
    <recommendedName>
        <fullName>Uncharacterized protein YppE</fullName>
    </recommendedName>
</protein>